<feature type="chain" id="PRO_1000060993" description="Small ribosomal subunit protein uS19">
    <location>
        <begin position="1"/>
        <end position="92"/>
    </location>
</feature>
<accession>A4WFC4</accession>
<keyword id="KW-0687">Ribonucleoprotein</keyword>
<keyword id="KW-0689">Ribosomal protein</keyword>
<keyword id="KW-0694">RNA-binding</keyword>
<keyword id="KW-0699">rRNA-binding</keyword>
<organism>
    <name type="scientific">Enterobacter sp. (strain 638)</name>
    <dbReference type="NCBI Taxonomy" id="399742"/>
    <lineage>
        <taxon>Bacteria</taxon>
        <taxon>Pseudomonadati</taxon>
        <taxon>Pseudomonadota</taxon>
        <taxon>Gammaproteobacteria</taxon>
        <taxon>Enterobacterales</taxon>
        <taxon>Enterobacteriaceae</taxon>
        <taxon>Enterobacter</taxon>
    </lineage>
</organism>
<name>RS19_ENT38</name>
<protein>
    <recommendedName>
        <fullName evidence="1">Small ribosomal subunit protein uS19</fullName>
    </recommendedName>
    <alternativeName>
        <fullName evidence="2">30S ribosomal protein S19</fullName>
    </alternativeName>
</protein>
<gene>
    <name evidence="1" type="primary">rpsS</name>
    <name type="ordered locus">Ent638_3747</name>
</gene>
<sequence>MPRSLKKGPFIDLHLLKKVEKAVESGDKKPLRTWSRRSTIFPNMIGLTIAVHNGRQHVPVFVSDEMVGHKLGEFAPTRTYRGHAADKKAKKK</sequence>
<proteinExistence type="inferred from homology"/>
<reference key="1">
    <citation type="journal article" date="2010" name="PLoS Genet.">
        <title>Genome sequence of the plant growth promoting endophytic bacterium Enterobacter sp. 638.</title>
        <authorList>
            <person name="Taghavi S."/>
            <person name="van der Lelie D."/>
            <person name="Hoffman A."/>
            <person name="Zhang Y.B."/>
            <person name="Walla M.D."/>
            <person name="Vangronsveld J."/>
            <person name="Newman L."/>
            <person name="Monchy S."/>
        </authorList>
    </citation>
    <scope>NUCLEOTIDE SEQUENCE [LARGE SCALE GENOMIC DNA]</scope>
    <source>
        <strain>638</strain>
    </source>
</reference>
<comment type="function">
    <text evidence="1">Protein S19 forms a complex with S13 that binds strongly to the 16S ribosomal RNA.</text>
</comment>
<comment type="similarity">
    <text evidence="1">Belongs to the universal ribosomal protein uS19 family.</text>
</comment>
<evidence type="ECO:0000255" key="1">
    <source>
        <dbReference type="HAMAP-Rule" id="MF_00531"/>
    </source>
</evidence>
<evidence type="ECO:0000305" key="2"/>
<dbReference type="EMBL" id="CP000653">
    <property type="protein sequence ID" value="ABP62404.1"/>
    <property type="molecule type" value="Genomic_DNA"/>
</dbReference>
<dbReference type="RefSeq" id="WP_001138115.1">
    <property type="nucleotide sequence ID" value="NC_009436.1"/>
</dbReference>
<dbReference type="SMR" id="A4WFC4"/>
<dbReference type="STRING" id="399742.Ent638_3747"/>
<dbReference type="GeneID" id="97603665"/>
<dbReference type="KEGG" id="ent:Ent638_3747"/>
<dbReference type="eggNOG" id="COG0185">
    <property type="taxonomic scope" value="Bacteria"/>
</dbReference>
<dbReference type="HOGENOM" id="CLU_144911_0_1_6"/>
<dbReference type="OrthoDB" id="9797833at2"/>
<dbReference type="Proteomes" id="UP000000230">
    <property type="component" value="Chromosome"/>
</dbReference>
<dbReference type="GO" id="GO:0005737">
    <property type="term" value="C:cytoplasm"/>
    <property type="evidence" value="ECO:0007669"/>
    <property type="project" value="UniProtKB-ARBA"/>
</dbReference>
<dbReference type="GO" id="GO:0015935">
    <property type="term" value="C:small ribosomal subunit"/>
    <property type="evidence" value="ECO:0007669"/>
    <property type="project" value="InterPro"/>
</dbReference>
<dbReference type="GO" id="GO:0019843">
    <property type="term" value="F:rRNA binding"/>
    <property type="evidence" value="ECO:0007669"/>
    <property type="project" value="UniProtKB-UniRule"/>
</dbReference>
<dbReference type="GO" id="GO:0003735">
    <property type="term" value="F:structural constituent of ribosome"/>
    <property type="evidence" value="ECO:0007669"/>
    <property type="project" value="InterPro"/>
</dbReference>
<dbReference type="GO" id="GO:0000028">
    <property type="term" value="P:ribosomal small subunit assembly"/>
    <property type="evidence" value="ECO:0007669"/>
    <property type="project" value="TreeGrafter"/>
</dbReference>
<dbReference type="GO" id="GO:0006412">
    <property type="term" value="P:translation"/>
    <property type="evidence" value="ECO:0007669"/>
    <property type="project" value="UniProtKB-UniRule"/>
</dbReference>
<dbReference type="FunFam" id="3.30.860.10:FF:000001">
    <property type="entry name" value="30S ribosomal protein S19"/>
    <property type="match status" value="1"/>
</dbReference>
<dbReference type="Gene3D" id="3.30.860.10">
    <property type="entry name" value="30s Ribosomal Protein S19, Chain A"/>
    <property type="match status" value="1"/>
</dbReference>
<dbReference type="HAMAP" id="MF_00531">
    <property type="entry name" value="Ribosomal_uS19"/>
    <property type="match status" value="1"/>
</dbReference>
<dbReference type="InterPro" id="IPR002222">
    <property type="entry name" value="Ribosomal_uS19"/>
</dbReference>
<dbReference type="InterPro" id="IPR005732">
    <property type="entry name" value="Ribosomal_uS19_bac-type"/>
</dbReference>
<dbReference type="InterPro" id="IPR020934">
    <property type="entry name" value="Ribosomal_uS19_CS"/>
</dbReference>
<dbReference type="InterPro" id="IPR023575">
    <property type="entry name" value="Ribosomal_uS19_SF"/>
</dbReference>
<dbReference type="NCBIfam" id="TIGR01050">
    <property type="entry name" value="rpsS_bact"/>
    <property type="match status" value="1"/>
</dbReference>
<dbReference type="PANTHER" id="PTHR11880">
    <property type="entry name" value="RIBOSOMAL PROTEIN S19P FAMILY MEMBER"/>
    <property type="match status" value="1"/>
</dbReference>
<dbReference type="PANTHER" id="PTHR11880:SF8">
    <property type="entry name" value="SMALL RIBOSOMAL SUBUNIT PROTEIN US19M"/>
    <property type="match status" value="1"/>
</dbReference>
<dbReference type="Pfam" id="PF00203">
    <property type="entry name" value="Ribosomal_S19"/>
    <property type="match status" value="1"/>
</dbReference>
<dbReference type="PIRSF" id="PIRSF002144">
    <property type="entry name" value="Ribosomal_S19"/>
    <property type="match status" value="1"/>
</dbReference>
<dbReference type="PRINTS" id="PR00975">
    <property type="entry name" value="RIBOSOMALS19"/>
</dbReference>
<dbReference type="SUPFAM" id="SSF54570">
    <property type="entry name" value="Ribosomal protein S19"/>
    <property type="match status" value="1"/>
</dbReference>
<dbReference type="PROSITE" id="PS00323">
    <property type="entry name" value="RIBOSOMAL_S19"/>
    <property type="match status" value="1"/>
</dbReference>